<sequence>MANQEIFDKLRDAIVNQNVAGTPELCKEALAAGVPALDIITKGLSVGMKIVGDKFEAAEIFLPQIMMSGKAMSNAMEVLTPELEKNKKEGEEAGLAITFVAEGDIHDIGHRLVTTMLGANGFQIVDLGVDVLNENVVEEAAKHKGEKVLLVGSALMTTSMLGQKDLMDRLNEEKLRDSVKCMFGGAPVSDKWIEEIGADATAENAAEAAKVALEVMK</sequence>
<gene>
    <name type="primary">mtmC1</name>
</gene>
<feature type="initiator methionine" description="Removed" evidence="5">
    <location>
        <position position="1"/>
    </location>
</feature>
<feature type="chain" id="PRO_0000216467" description="Monomethylamine corrinoid protein 1">
    <location>
        <begin position="2"/>
        <end position="217"/>
    </location>
</feature>
<feature type="domain" description="B12-binding N-terminal" evidence="3">
    <location>
        <begin position="1"/>
        <end position="91"/>
    </location>
</feature>
<feature type="domain" description="B12-binding" evidence="2">
    <location>
        <begin position="93"/>
        <end position="217"/>
    </location>
</feature>
<feature type="binding site" description="axial binding residue" evidence="1">
    <location>
        <position position="106"/>
    </location>
    <ligand>
        <name>methylcob(III)alamin</name>
        <dbReference type="ChEBI" id="CHEBI:28115"/>
    </ligand>
    <ligandPart>
        <name>Co</name>
        <dbReference type="ChEBI" id="CHEBI:27638"/>
    </ligandPart>
</feature>
<feature type="helix" evidence="7">
    <location>
        <begin position="4"/>
        <end position="15"/>
    </location>
</feature>
<feature type="helix" evidence="7">
    <location>
        <begin position="21"/>
        <end position="31"/>
    </location>
</feature>
<feature type="helix" evidence="7">
    <location>
        <begin position="36"/>
        <end position="42"/>
    </location>
</feature>
<feature type="helix" evidence="7">
    <location>
        <begin position="44"/>
        <end position="56"/>
    </location>
</feature>
<feature type="helix" evidence="7">
    <location>
        <begin position="62"/>
        <end position="83"/>
    </location>
</feature>
<feature type="strand" evidence="7">
    <location>
        <begin position="95"/>
        <end position="100"/>
    </location>
</feature>
<feature type="helix" evidence="7">
    <location>
        <begin position="108"/>
        <end position="119"/>
    </location>
</feature>
<feature type="strand" evidence="7">
    <location>
        <begin position="123"/>
        <end position="126"/>
    </location>
</feature>
<feature type="helix" evidence="7">
    <location>
        <begin position="133"/>
        <end position="142"/>
    </location>
</feature>
<feature type="turn" evidence="7">
    <location>
        <begin position="143"/>
        <end position="145"/>
    </location>
</feature>
<feature type="strand" evidence="7">
    <location>
        <begin position="148"/>
        <end position="153"/>
    </location>
</feature>
<feature type="helix" evidence="7">
    <location>
        <begin position="157"/>
        <end position="160"/>
    </location>
</feature>
<feature type="helix" evidence="7">
    <location>
        <begin position="162"/>
        <end position="172"/>
    </location>
</feature>
<feature type="helix" evidence="7">
    <location>
        <begin position="176"/>
        <end position="178"/>
    </location>
</feature>
<feature type="strand" evidence="7">
    <location>
        <begin position="179"/>
        <end position="187"/>
    </location>
</feature>
<feature type="helix" evidence="7">
    <location>
        <begin position="190"/>
        <end position="196"/>
    </location>
</feature>
<feature type="helix" evidence="7">
    <location>
        <begin position="205"/>
        <end position="214"/>
    </location>
</feature>
<protein>
    <recommendedName>
        <fullName>Monomethylamine corrinoid protein 1</fullName>
        <shortName>MMCP 1</shortName>
    </recommendedName>
</protein>
<reference key="1">
    <citation type="journal article" date="1998" name="J. Bacteriol.">
        <title>Clustered genes encoding the methyltransferases of methanogenesis from monomethylamine.</title>
        <authorList>
            <person name="Burke S.A."/>
            <person name="Lo S.L."/>
            <person name="Krzycki J.A."/>
        </authorList>
    </citation>
    <scope>NUCLEOTIDE SEQUENCE [GENOMIC DNA]</scope>
    <scope>PROTEIN SEQUENCE OF 2-28</scope>
    <source>
        <strain>ATCC 43569 / MS / DSM 800 / JCM 10043 / NBRC 100474</strain>
    </source>
</reference>
<reference key="2">
    <citation type="journal article" date="1995" name="J. Bacteriol.">
        <title>Involvement of the 'A' isozyme of methyltransferase II and the 29-kilodalton corrinoid protein in methanogenesis from monomethylamine.</title>
        <authorList>
            <person name="Burke S.A."/>
            <person name="Krzycki J.A."/>
        </authorList>
    </citation>
    <scope>CHARACTERIZATION</scope>
    <source>
        <strain>ATCC 43569 / MS / DSM 800 / JCM 10043 / NBRC 100474</strain>
    </source>
</reference>
<reference key="3">
    <citation type="journal article" date="1997" name="J. Biol. Chem.">
        <title>Reconstitution of monomethylamine:coenzyme M methyl transfer with a corrinoid protein and two methyltransferases purified from Methanosarcina barkeri.</title>
        <authorList>
            <person name="Burke S.A."/>
            <person name="Krzycki J.A."/>
        </authorList>
    </citation>
    <scope>CHARACTERIZATION</scope>
    <source>
        <strain>ATCC 43569 / MS / DSM 800 / JCM 10043 / NBRC 100474</strain>
    </source>
</reference>
<reference key="4">
    <citation type="journal article" date="2002" name="Science">
        <title>A new UAG-encoded residue in the structure of a methanogen methyltransferase.</title>
        <authorList>
            <person name="Hao B."/>
            <person name="Gong W."/>
            <person name="Ferguson T.K."/>
            <person name="James C.M."/>
            <person name="Krzycki J.A."/>
            <person name="Chan M.K."/>
        </authorList>
    </citation>
    <scope>MASS SPECTROMETRY</scope>
</reference>
<comment type="function">
    <text>Acts as a methyl group carrier between MtmB and MtbA.</text>
</comment>
<comment type="pathway">
    <text>One-carbon metabolism; methanogenesis from methylamine.</text>
</comment>
<comment type="subunit">
    <text>Can form a complex with MtmB.</text>
</comment>
<comment type="mass spectrometry"/>
<comment type="similarity">
    <text evidence="6">Belongs to the methylamine corrinoid protein family.</text>
</comment>
<name>MTMC1_METBA</name>
<keyword id="KW-0002">3D-structure</keyword>
<keyword id="KW-0170">Cobalt</keyword>
<keyword id="KW-0903">Direct protein sequencing</keyword>
<keyword id="KW-0479">Metal-binding</keyword>
<keyword id="KW-0484">Methanogenesis</keyword>
<keyword id="KW-0677">Repeat</keyword>
<proteinExistence type="evidence at protein level"/>
<dbReference type="EMBL" id="AF013713">
    <property type="protein sequence ID" value="AAC38633.1"/>
    <property type="molecule type" value="Genomic_DNA"/>
</dbReference>
<dbReference type="PDB" id="3EZX">
    <property type="method" value="X-ray"/>
    <property type="resolution" value="2.56 A"/>
    <property type="chains" value="A=2-216"/>
</dbReference>
<dbReference type="PDBsum" id="3EZX"/>
<dbReference type="SMR" id="O30641"/>
<dbReference type="BioCyc" id="MetaCyc:MONOMER-12209"/>
<dbReference type="UniPathway" id="UPA00643"/>
<dbReference type="EvolutionaryTrace" id="O30641"/>
<dbReference type="GO" id="GO:0005829">
    <property type="term" value="C:cytosol"/>
    <property type="evidence" value="ECO:0007669"/>
    <property type="project" value="TreeGrafter"/>
</dbReference>
<dbReference type="GO" id="GO:0031419">
    <property type="term" value="F:cobalamin binding"/>
    <property type="evidence" value="ECO:0007669"/>
    <property type="project" value="InterPro"/>
</dbReference>
<dbReference type="GO" id="GO:0050897">
    <property type="term" value="F:cobalt ion binding"/>
    <property type="evidence" value="ECO:0007669"/>
    <property type="project" value="InterPro"/>
</dbReference>
<dbReference type="GO" id="GO:0008705">
    <property type="term" value="F:methionine synthase activity"/>
    <property type="evidence" value="ECO:0007669"/>
    <property type="project" value="TreeGrafter"/>
</dbReference>
<dbReference type="GO" id="GO:0043852">
    <property type="term" value="F:monomethylamine methyltransferase activity"/>
    <property type="evidence" value="ECO:0000314"/>
    <property type="project" value="MENGO"/>
</dbReference>
<dbReference type="GO" id="GO:0050667">
    <property type="term" value="P:homocysteine metabolic process"/>
    <property type="evidence" value="ECO:0007669"/>
    <property type="project" value="TreeGrafter"/>
</dbReference>
<dbReference type="GO" id="GO:0015948">
    <property type="term" value="P:methanogenesis"/>
    <property type="evidence" value="ECO:0007669"/>
    <property type="project" value="UniProtKB-KW"/>
</dbReference>
<dbReference type="GO" id="GO:0046653">
    <property type="term" value="P:tetrahydrofolate metabolic process"/>
    <property type="evidence" value="ECO:0007669"/>
    <property type="project" value="TreeGrafter"/>
</dbReference>
<dbReference type="CDD" id="cd02070">
    <property type="entry name" value="corrinoid_protein_B12-BD"/>
    <property type="match status" value="1"/>
</dbReference>
<dbReference type="FunFam" id="3.40.50.280:FF:000007">
    <property type="entry name" value="Monomethylamine corrinoid protein 1"/>
    <property type="match status" value="1"/>
</dbReference>
<dbReference type="FunFam" id="1.10.1240.10:FF:000004">
    <property type="entry name" value="Monomethylamine methyltransferase corrinoid protein"/>
    <property type="match status" value="1"/>
</dbReference>
<dbReference type="Gene3D" id="3.40.50.280">
    <property type="entry name" value="Cobalamin-binding domain"/>
    <property type="match status" value="1"/>
</dbReference>
<dbReference type="Gene3D" id="1.10.1240.10">
    <property type="entry name" value="Methionine synthase domain"/>
    <property type="match status" value="1"/>
</dbReference>
<dbReference type="InterPro" id="IPR003759">
    <property type="entry name" value="Cbl-bd_cap"/>
</dbReference>
<dbReference type="InterPro" id="IPR006158">
    <property type="entry name" value="Cobalamin-bd"/>
</dbReference>
<dbReference type="InterPro" id="IPR036724">
    <property type="entry name" value="Cobalamin-bd_sf"/>
</dbReference>
<dbReference type="InterPro" id="IPR012741">
    <property type="entry name" value="Corrinoid_p"/>
</dbReference>
<dbReference type="InterPro" id="IPR050554">
    <property type="entry name" value="Met_Synthase/Corrinoid"/>
</dbReference>
<dbReference type="InterPro" id="IPR036594">
    <property type="entry name" value="Meth_synthase_dom"/>
</dbReference>
<dbReference type="NCBIfam" id="TIGR02370">
    <property type="entry name" value="pyl_corrinoid"/>
    <property type="match status" value="1"/>
</dbReference>
<dbReference type="PANTHER" id="PTHR45833">
    <property type="entry name" value="METHIONINE SYNTHASE"/>
    <property type="match status" value="1"/>
</dbReference>
<dbReference type="PANTHER" id="PTHR45833:SF1">
    <property type="entry name" value="METHIONINE SYNTHASE"/>
    <property type="match status" value="1"/>
</dbReference>
<dbReference type="Pfam" id="PF02310">
    <property type="entry name" value="B12-binding"/>
    <property type="match status" value="1"/>
</dbReference>
<dbReference type="Pfam" id="PF02607">
    <property type="entry name" value="B12-binding_2"/>
    <property type="match status" value="1"/>
</dbReference>
<dbReference type="SMART" id="SM01018">
    <property type="entry name" value="B12-binding_2"/>
    <property type="match status" value="1"/>
</dbReference>
<dbReference type="SUPFAM" id="SSF52242">
    <property type="entry name" value="Cobalamin (vitamin B12)-binding domain"/>
    <property type="match status" value="1"/>
</dbReference>
<dbReference type="SUPFAM" id="SSF47644">
    <property type="entry name" value="Methionine synthase domain"/>
    <property type="match status" value="1"/>
</dbReference>
<dbReference type="PROSITE" id="PS51332">
    <property type="entry name" value="B12_BINDING"/>
    <property type="match status" value="1"/>
</dbReference>
<dbReference type="PROSITE" id="PS51337">
    <property type="entry name" value="B12_BINDING_NTER"/>
    <property type="match status" value="1"/>
</dbReference>
<evidence type="ECO:0000250" key="1"/>
<evidence type="ECO:0000255" key="2">
    <source>
        <dbReference type="PROSITE-ProRule" id="PRU00666"/>
    </source>
</evidence>
<evidence type="ECO:0000255" key="3">
    <source>
        <dbReference type="PROSITE-ProRule" id="PRU00667"/>
    </source>
</evidence>
<evidence type="ECO:0000269" key="4">
    <source>
    </source>
</evidence>
<evidence type="ECO:0000269" key="5">
    <source>
    </source>
</evidence>
<evidence type="ECO:0000305" key="6"/>
<evidence type="ECO:0007829" key="7">
    <source>
        <dbReference type="PDB" id="3EZX"/>
    </source>
</evidence>
<accession>O30641</accession>
<organism>
    <name type="scientific">Methanosarcina barkeri</name>
    <dbReference type="NCBI Taxonomy" id="2208"/>
    <lineage>
        <taxon>Archaea</taxon>
        <taxon>Methanobacteriati</taxon>
        <taxon>Methanobacteriota</taxon>
        <taxon>Stenosarchaea group</taxon>
        <taxon>Methanomicrobia</taxon>
        <taxon>Methanosarcinales</taxon>
        <taxon>Methanosarcinaceae</taxon>
        <taxon>Methanosarcina</taxon>
    </lineage>
</organism>